<comment type="function">
    <text evidence="1">Calcium-regulated non-lysosomal thiol-protease which catalyzes limited proteolysis of substrates involved in cytoskeletal remodeling and signal transduction. May play a role in insulin-stimulated glucose uptake (By similarity).</text>
</comment>
<comment type="similarity">
    <text evidence="3">Belongs to the peptidase C2 family.</text>
</comment>
<organism>
    <name type="scientific">Mus musculus</name>
    <name type="common">Mouse</name>
    <dbReference type="NCBI Taxonomy" id="10090"/>
    <lineage>
        <taxon>Eukaryota</taxon>
        <taxon>Metazoa</taxon>
        <taxon>Chordata</taxon>
        <taxon>Craniata</taxon>
        <taxon>Vertebrata</taxon>
        <taxon>Euteleostomi</taxon>
        <taxon>Mammalia</taxon>
        <taxon>Eutheria</taxon>
        <taxon>Euarchontoglires</taxon>
        <taxon>Glires</taxon>
        <taxon>Rodentia</taxon>
        <taxon>Myomorpha</taxon>
        <taxon>Muroidea</taxon>
        <taxon>Muridae</taxon>
        <taxon>Murinae</taxon>
        <taxon>Mus</taxon>
        <taxon>Mus</taxon>
    </lineage>
</organism>
<name>CAN10_MOUSE</name>
<sequence>MRAVRAETPARELFRDAAFPASDSSLFYNLSTPLAQFREDITWRRPQEICATPQLFPDNPWEGQVKQGLLGDCWFLCACAALQKSQHLLDQVFPPGQPGWSDQKYQGFFTCRIWQFGHWEEVTIDDRLPCLAGRLCFSRCQREDVFWLPLLEKAYAKVHGSYEHLWAGQVADALVDLTGSLAERWSLKDVTKASGQQDRPSGGEHRTCRQLLHLKDRCLISCSVLSPRAGARELGEFHAFIISDLQELRSQTGQGILLLRIHNPWGRRCWQGLWREGGEGWNQVEPAKESELLAQLQEGEFWVEEEEFLREFDEVTIGYPVTEAGHLQSLHTERVLCHTRTLPGAWVTGQSAGGCRNNSCFPCNPKFWLRLLEPSEVCVAVLQRPRRRLVGQTRALAGASPAPVNLPGKDYQAVGLHIWKVEKRKISLPRVLSAPPVAGTACHAYDREIHLRCELSPGYYLAVPSTFLKDVPGQFLLRVFSTGKISLSAVRLATKGASPGTALPAGEWETVQLQGCWRAGQTAGGSRNFASYPCNPCLPFSVPEGAGPRYIRITLQQHCRLSDSQLHPIGFHVFQVPADGENQDACSLLLQEPLLSCVPHRYAQEVSRLCLLSVGNYRIVPSTYLPDTEGTFTVTIATRIDRQSIHSQEMLGQLLQEVSFMAVMKA</sequence>
<accession>Q9ESK3</accession>
<accession>Q99J13</accession>
<accession>Q9WVF0</accession>
<dbReference type="EC" id="3.4.22.-"/>
<dbReference type="EMBL" id="AF089089">
    <property type="protein sequence ID" value="AAG17967.1"/>
    <property type="molecule type" value="mRNA"/>
</dbReference>
<dbReference type="EMBL" id="AF203031">
    <property type="protein sequence ID" value="AAL54919.1"/>
    <property type="molecule type" value="Genomic_DNA"/>
</dbReference>
<dbReference type="EMBL" id="AF126867">
    <property type="protein sequence ID" value="AAD41779.1"/>
    <property type="molecule type" value="mRNA"/>
</dbReference>
<dbReference type="EMBL" id="AK088207">
    <property type="protein sequence ID" value="BAC40211.1"/>
    <property type="molecule type" value="mRNA"/>
</dbReference>
<dbReference type="EMBL" id="BC005681">
    <property type="protein sequence ID" value="AAH05681.1"/>
    <property type="molecule type" value="mRNA"/>
</dbReference>
<dbReference type="EMBL" id="BC010969">
    <property type="protein sequence ID" value="AAH10969.1"/>
    <property type="molecule type" value="mRNA"/>
</dbReference>
<dbReference type="CCDS" id="CCDS15181.1"/>
<dbReference type="RefSeq" id="NP_035926.2">
    <property type="nucleotide sequence ID" value="NM_011796.2"/>
</dbReference>
<dbReference type="SMR" id="Q9ESK3"/>
<dbReference type="BioGRID" id="204746">
    <property type="interactions" value="2"/>
</dbReference>
<dbReference type="FunCoup" id="Q9ESK3">
    <property type="interactions" value="1064"/>
</dbReference>
<dbReference type="STRING" id="10090.ENSMUSP00000027488"/>
<dbReference type="MEROPS" id="C02.018"/>
<dbReference type="iPTMnet" id="Q9ESK3"/>
<dbReference type="PhosphoSitePlus" id="Q9ESK3"/>
<dbReference type="PaxDb" id="10090-ENSMUSP00000027488"/>
<dbReference type="ProteomicsDB" id="265521"/>
<dbReference type="Antibodypedia" id="1333">
    <property type="antibodies" value="170 antibodies from 24 providers"/>
</dbReference>
<dbReference type="DNASU" id="23830"/>
<dbReference type="Ensembl" id="ENSMUST00000027488.11">
    <property type="protein sequence ID" value="ENSMUSP00000027488.5"/>
    <property type="gene ID" value="ENSMUSG00000026270.12"/>
</dbReference>
<dbReference type="GeneID" id="23830"/>
<dbReference type="KEGG" id="mmu:23830"/>
<dbReference type="UCSC" id="uc007cby.1">
    <property type="organism name" value="mouse"/>
</dbReference>
<dbReference type="AGR" id="MGI:1344392"/>
<dbReference type="CTD" id="11132"/>
<dbReference type="MGI" id="MGI:1344392">
    <property type="gene designation" value="Capn10"/>
</dbReference>
<dbReference type="VEuPathDB" id="HostDB:ENSMUSG00000026270"/>
<dbReference type="eggNOG" id="KOG0045">
    <property type="taxonomic scope" value="Eukaryota"/>
</dbReference>
<dbReference type="GeneTree" id="ENSGT00940000159706"/>
<dbReference type="HOGENOM" id="CLU_010982_3_3_1"/>
<dbReference type="InParanoid" id="Q9ESK3"/>
<dbReference type="OMA" id="ECALSCS"/>
<dbReference type="OrthoDB" id="167576at2759"/>
<dbReference type="PhylomeDB" id="Q9ESK3"/>
<dbReference type="TreeFam" id="TF314748"/>
<dbReference type="BRENDA" id="3.4.22.B30">
    <property type="organism ID" value="3474"/>
</dbReference>
<dbReference type="Reactome" id="R-MMU-1474228">
    <property type="pathway name" value="Degradation of the extracellular matrix"/>
</dbReference>
<dbReference type="BioGRID-ORCS" id="23830">
    <property type="hits" value="3 hits in 76 CRISPR screens"/>
</dbReference>
<dbReference type="ChiTaRS" id="Capn10">
    <property type="organism name" value="mouse"/>
</dbReference>
<dbReference type="PRO" id="PR:Q9ESK3"/>
<dbReference type="Proteomes" id="UP000000589">
    <property type="component" value="Chromosome 1"/>
</dbReference>
<dbReference type="RNAct" id="Q9ESK3">
    <property type="molecule type" value="protein"/>
</dbReference>
<dbReference type="Bgee" id="ENSMUSG00000026270">
    <property type="expression patterns" value="Expressed in spermatocyte and 257 other cell types or tissues"/>
</dbReference>
<dbReference type="ExpressionAtlas" id="Q9ESK3">
    <property type="expression patterns" value="baseline and differential"/>
</dbReference>
<dbReference type="GO" id="GO:0005829">
    <property type="term" value="C:cytosol"/>
    <property type="evidence" value="ECO:0007669"/>
    <property type="project" value="Ensembl"/>
</dbReference>
<dbReference type="GO" id="GO:0005739">
    <property type="term" value="C:mitochondrion"/>
    <property type="evidence" value="ECO:0007669"/>
    <property type="project" value="Ensembl"/>
</dbReference>
<dbReference type="GO" id="GO:0004198">
    <property type="term" value="F:calcium-dependent cysteine-type endopeptidase activity"/>
    <property type="evidence" value="ECO:0007669"/>
    <property type="project" value="Ensembl"/>
</dbReference>
<dbReference type="GO" id="GO:0032869">
    <property type="term" value="P:cellular response to insulin stimulus"/>
    <property type="evidence" value="ECO:0000315"/>
    <property type="project" value="BHF-UCL"/>
</dbReference>
<dbReference type="GO" id="GO:0046326">
    <property type="term" value="P:positive regulation of D-glucose import"/>
    <property type="evidence" value="ECO:0000315"/>
    <property type="project" value="BHF-UCL"/>
</dbReference>
<dbReference type="GO" id="GO:0032024">
    <property type="term" value="P:positive regulation of insulin secretion"/>
    <property type="evidence" value="ECO:0007669"/>
    <property type="project" value="Ensembl"/>
</dbReference>
<dbReference type="GO" id="GO:0032388">
    <property type="term" value="P:positive regulation of intracellular transport"/>
    <property type="evidence" value="ECO:0000315"/>
    <property type="project" value="BHF-UCL"/>
</dbReference>
<dbReference type="GO" id="GO:2000676">
    <property type="term" value="P:positive regulation of type B pancreatic cell apoptotic process"/>
    <property type="evidence" value="ECO:0000315"/>
    <property type="project" value="MGI"/>
</dbReference>
<dbReference type="GO" id="GO:0006508">
    <property type="term" value="P:proteolysis"/>
    <property type="evidence" value="ECO:0007669"/>
    <property type="project" value="UniProtKB-KW"/>
</dbReference>
<dbReference type="GO" id="GO:0032956">
    <property type="term" value="P:regulation of actin cytoskeleton organization"/>
    <property type="evidence" value="ECO:0000315"/>
    <property type="project" value="BHF-UCL"/>
</dbReference>
<dbReference type="GO" id="GO:0097050">
    <property type="term" value="P:type B pancreatic cell apoptotic process"/>
    <property type="evidence" value="ECO:0000315"/>
    <property type="project" value="BHF-UCL"/>
</dbReference>
<dbReference type="CDD" id="cd00214">
    <property type="entry name" value="Calpain_III"/>
    <property type="match status" value="2"/>
</dbReference>
<dbReference type="CDD" id="cd00044">
    <property type="entry name" value="CysPc"/>
    <property type="match status" value="1"/>
</dbReference>
<dbReference type="FunFam" id="2.60.120.380:FF:000006">
    <property type="entry name" value="Calpain 10"/>
    <property type="match status" value="1"/>
</dbReference>
<dbReference type="FunFam" id="2.60.120.380:FF:000010">
    <property type="entry name" value="Calpain 10"/>
    <property type="match status" value="1"/>
</dbReference>
<dbReference type="FunFam" id="3.90.70.10:FF:000073">
    <property type="entry name" value="Calpain 10"/>
    <property type="match status" value="1"/>
</dbReference>
<dbReference type="Gene3D" id="2.60.120.380">
    <property type="match status" value="2"/>
</dbReference>
<dbReference type="Gene3D" id="3.90.70.10">
    <property type="entry name" value="Cysteine proteinases"/>
    <property type="match status" value="1"/>
</dbReference>
<dbReference type="InterPro" id="IPR033883">
    <property type="entry name" value="C2_III"/>
</dbReference>
<dbReference type="InterPro" id="IPR022684">
    <property type="entry name" value="Calpain_cysteine_protease"/>
</dbReference>
<dbReference type="InterPro" id="IPR022682">
    <property type="entry name" value="Calpain_domain_III"/>
</dbReference>
<dbReference type="InterPro" id="IPR022683">
    <property type="entry name" value="Calpain_III"/>
</dbReference>
<dbReference type="InterPro" id="IPR036213">
    <property type="entry name" value="Calpain_III_sf"/>
</dbReference>
<dbReference type="InterPro" id="IPR038765">
    <property type="entry name" value="Papain-like_cys_pep_sf"/>
</dbReference>
<dbReference type="InterPro" id="IPR000169">
    <property type="entry name" value="Pept_cys_AS"/>
</dbReference>
<dbReference type="InterPro" id="IPR001300">
    <property type="entry name" value="Peptidase_C2_calpain_cat"/>
</dbReference>
<dbReference type="PANTHER" id="PTHR10183">
    <property type="entry name" value="CALPAIN"/>
    <property type="match status" value="1"/>
</dbReference>
<dbReference type="PANTHER" id="PTHR10183:SF30">
    <property type="entry name" value="CALPAIN-10"/>
    <property type="match status" value="1"/>
</dbReference>
<dbReference type="Pfam" id="PF01067">
    <property type="entry name" value="Calpain_III"/>
    <property type="match status" value="2"/>
</dbReference>
<dbReference type="Pfam" id="PF00648">
    <property type="entry name" value="Peptidase_C2"/>
    <property type="match status" value="1"/>
</dbReference>
<dbReference type="PRINTS" id="PR00704">
    <property type="entry name" value="CALPAIN"/>
</dbReference>
<dbReference type="SMART" id="SM00720">
    <property type="entry name" value="calpain_III"/>
    <property type="match status" value="2"/>
</dbReference>
<dbReference type="SMART" id="SM00230">
    <property type="entry name" value="CysPc"/>
    <property type="match status" value="1"/>
</dbReference>
<dbReference type="SUPFAM" id="SSF49758">
    <property type="entry name" value="Calpain large subunit, middle domain (domain III)"/>
    <property type="match status" value="2"/>
</dbReference>
<dbReference type="SUPFAM" id="SSF54001">
    <property type="entry name" value="Cysteine proteinases"/>
    <property type="match status" value="1"/>
</dbReference>
<dbReference type="PROSITE" id="PS50203">
    <property type="entry name" value="CALPAIN_CAT"/>
    <property type="match status" value="1"/>
</dbReference>
<dbReference type="PROSITE" id="PS00139">
    <property type="entry name" value="THIOL_PROTEASE_CYS"/>
    <property type="match status" value="1"/>
</dbReference>
<keyword id="KW-0378">Hydrolase</keyword>
<keyword id="KW-0645">Protease</keyword>
<keyword id="KW-1185">Reference proteome</keyword>
<keyword id="KW-0677">Repeat</keyword>
<keyword id="KW-0788">Thiol protease</keyword>
<feature type="chain" id="PRO_0000207727" description="Calpain-10">
    <location>
        <begin position="1"/>
        <end position="666"/>
    </location>
</feature>
<feature type="domain" description="Calpain catalytic" evidence="2">
    <location>
        <begin position="13"/>
        <end position="321"/>
    </location>
</feature>
<feature type="region of interest" description="Domain III 1">
    <location>
        <begin position="322"/>
        <end position="488"/>
    </location>
</feature>
<feature type="region of interest" description="Domain III 2">
    <location>
        <begin position="507"/>
        <end position="648"/>
    </location>
</feature>
<feature type="active site" evidence="1">
    <location>
        <position position="73"/>
    </location>
</feature>
<feature type="active site" evidence="1">
    <location>
        <position position="238"/>
    </location>
</feature>
<feature type="active site" evidence="1">
    <location>
        <position position="263"/>
    </location>
</feature>
<feature type="sequence conflict" description="In Ref. 1 and 2." evidence="3" ref="1 2">
    <original>S</original>
    <variation>F</variation>
    <location>
        <position position="481"/>
    </location>
</feature>
<feature type="sequence conflict" description="In Ref. 3." evidence="3" ref="3">
    <original>YAQE</original>
    <variation>TPRK</variation>
    <location>
        <begin position="602"/>
        <end position="605"/>
    </location>
</feature>
<feature type="sequence conflict" description="In Ref. 4; BAC40211." evidence="3" ref="4">
    <original>V</original>
    <variation>E</variation>
    <location>
        <position position="663"/>
    </location>
</feature>
<reference key="1">
    <citation type="journal article" date="2000" name="Nat. Genet.">
        <title>Genetic variation in the gene encoding calpain-10 is associated with type 2 diabetes mellitus.</title>
        <authorList>
            <person name="Horikawa Y."/>
            <person name="Oda N."/>
            <person name="Cox N.J."/>
            <person name="Li X."/>
            <person name="Orho-Melander M."/>
            <person name="Hara M."/>
            <person name="Hinokio Y."/>
            <person name="Lindner T.H."/>
            <person name="Mashima H."/>
            <person name="Schwarz P.E.H."/>
            <person name="del Bosque-Plata L."/>
            <person name="Horikawa Y."/>
            <person name="Oda Y."/>
            <person name="Yoshiuchi I."/>
            <person name="Colilla S."/>
            <person name="Polonsky K.S."/>
            <person name="Wei S."/>
            <person name="Concannon P."/>
            <person name="Iwasaki N."/>
            <person name="Schulze J."/>
            <person name="Baier L.J."/>
            <person name="Bogardus C."/>
            <person name="Groop L."/>
            <person name="Boerwinkle E."/>
            <person name="Hanis C.L."/>
            <person name="Bell G.I."/>
        </authorList>
    </citation>
    <scope>NUCLEOTIDE SEQUENCE [MRNA]</scope>
</reference>
<reference key="2">
    <citation type="submission" date="1999-11" db="EMBL/GenBank/DDBJ databases">
        <title>Cloning of mouse protease gene.</title>
        <authorList>
            <person name="Horikawa Y."/>
            <person name="Ye H."/>
            <person name="Bell G.I."/>
        </authorList>
    </citation>
    <scope>NUCLEOTIDE SEQUENCE</scope>
    <source>
        <strain>129/SvJ</strain>
    </source>
</reference>
<reference key="3">
    <citation type="submission" date="1999-02" db="EMBL/GenBank/DDBJ databases">
        <title>Identification of a new calpain-like cDNA in mouse lung.</title>
        <authorList>
            <person name="Braun C."/>
            <person name="Seifert M."/>
            <person name="Engel M."/>
            <person name="Welter C."/>
        </authorList>
    </citation>
    <scope>NUCLEOTIDE SEQUENCE</scope>
    <source>
        <tissue>Lung</tissue>
    </source>
</reference>
<reference key="4">
    <citation type="journal article" date="2005" name="Science">
        <title>The transcriptional landscape of the mammalian genome.</title>
        <authorList>
            <person name="Carninci P."/>
            <person name="Kasukawa T."/>
            <person name="Katayama S."/>
            <person name="Gough J."/>
            <person name="Frith M.C."/>
            <person name="Maeda N."/>
            <person name="Oyama R."/>
            <person name="Ravasi T."/>
            <person name="Lenhard B."/>
            <person name="Wells C."/>
            <person name="Kodzius R."/>
            <person name="Shimokawa K."/>
            <person name="Bajic V.B."/>
            <person name="Brenner S.E."/>
            <person name="Batalov S."/>
            <person name="Forrest A.R."/>
            <person name="Zavolan M."/>
            <person name="Davis M.J."/>
            <person name="Wilming L.G."/>
            <person name="Aidinis V."/>
            <person name="Allen J.E."/>
            <person name="Ambesi-Impiombato A."/>
            <person name="Apweiler R."/>
            <person name="Aturaliya R.N."/>
            <person name="Bailey T.L."/>
            <person name="Bansal M."/>
            <person name="Baxter L."/>
            <person name="Beisel K.W."/>
            <person name="Bersano T."/>
            <person name="Bono H."/>
            <person name="Chalk A.M."/>
            <person name="Chiu K.P."/>
            <person name="Choudhary V."/>
            <person name="Christoffels A."/>
            <person name="Clutterbuck D.R."/>
            <person name="Crowe M.L."/>
            <person name="Dalla E."/>
            <person name="Dalrymple B.P."/>
            <person name="de Bono B."/>
            <person name="Della Gatta G."/>
            <person name="di Bernardo D."/>
            <person name="Down T."/>
            <person name="Engstrom P."/>
            <person name="Fagiolini M."/>
            <person name="Faulkner G."/>
            <person name="Fletcher C.F."/>
            <person name="Fukushima T."/>
            <person name="Furuno M."/>
            <person name="Futaki S."/>
            <person name="Gariboldi M."/>
            <person name="Georgii-Hemming P."/>
            <person name="Gingeras T.R."/>
            <person name="Gojobori T."/>
            <person name="Green R.E."/>
            <person name="Gustincich S."/>
            <person name="Harbers M."/>
            <person name="Hayashi Y."/>
            <person name="Hensch T.K."/>
            <person name="Hirokawa N."/>
            <person name="Hill D."/>
            <person name="Huminiecki L."/>
            <person name="Iacono M."/>
            <person name="Ikeo K."/>
            <person name="Iwama A."/>
            <person name="Ishikawa T."/>
            <person name="Jakt M."/>
            <person name="Kanapin A."/>
            <person name="Katoh M."/>
            <person name="Kawasawa Y."/>
            <person name="Kelso J."/>
            <person name="Kitamura H."/>
            <person name="Kitano H."/>
            <person name="Kollias G."/>
            <person name="Krishnan S.P."/>
            <person name="Kruger A."/>
            <person name="Kummerfeld S.K."/>
            <person name="Kurochkin I.V."/>
            <person name="Lareau L.F."/>
            <person name="Lazarevic D."/>
            <person name="Lipovich L."/>
            <person name="Liu J."/>
            <person name="Liuni S."/>
            <person name="McWilliam S."/>
            <person name="Madan Babu M."/>
            <person name="Madera M."/>
            <person name="Marchionni L."/>
            <person name="Matsuda H."/>
            <person name="Matsuzawa S."/>
            <person name="Miki H."/>
            <person name="Mignone F."/>
            <person name="Miyake S."/>
            <person name="Morris K."/>
            <person name="Mottagui-Tabar S."/>
            <person name="Mulder N."/>
            <person name="Nakano N."/>
            <person name="Nakauchi H."/>
            <person name="Ng P."/>
            <person name="Nilsson R."/>
            <person name="Nishiguchi S."/>
            <person name="Nishikawa S."/>
            <person name="Nori F."/>
            <person name="Ohara O."/>
            <person name="Okazaki Y."/>
            <person name="Orlando V."/>
            <person name="Pang K.C."/>
            <person name="Pavan W.J."/>
            <person name="Pavesi G."/>
            <person name="Pesole G."/>
            <person name="Petrovsky N."/>
            <person name="Piazza S."/>
            <person name="Reed J."/>
            <person name="Reid J.F."/>
            <person name="Ring B.Z."/>
            <person name="Ringwald M."/>
            <person name="Rost B."/>
            <person name="Ruan Y."/>
            <person name="Salzberg S.L."/>
            <person name="Sandelin A."/>
            <person name="Schneider C."/>
            <person name="Schoenbach C."/>
            <person name="Sekiguchi K."/>
            <person name="Semple C.A."/>
            <person name="Seno S."/>
            <person name="Sessa L."/>
            <person name="Sheng Y."/>
            <person name="Shibata Y."/>
            <person name="Shimada H."/>
            <person name="Shimada K."/>
            <person name="Silva D."/>
            <person name="Sinclair B."/>
            <person name="Sperling S."/>
            <person name="Stupka E."/>
            <person name="Sugiura K."/>
            <person name="Sultana R."/>
            <person name="Takenaka Y."/>
            <person name="Taki K."/>
            <person name="Tammoja K."/>
            <person name="Tan S.L."/>
            <person name="Tang S."/>
            <person name="Taylor M.S."/>
            <person name="Tegner J."/>
            <person name="Teichmann S.A."/>
            <person name="Ueda H.R."/>
            <person name="van Nimwegen E."/>
            <person name="Verardo R."/>
            <person name="Wei C.L."/>
            <person name="Yagi K."/>
            <person name="Yamanishi H."/>
            <person name="Zabarovsky E."/>
            <person name="Zhu S."/>
            <person name="Zimmer A."/>
            <person name="Hide W."/>
            <person name="Bult C."/>
            <person name="Grimmond S.M."/>
            <person name="Teasdale R.D."/>
            <person name="Liu E.T."/>
            <person name="Brusic V."/>
            <person name="Quackenbush J."/>
            <person name="Wahlestedt C."/>
            <person name="Mattick J.S."/>
            <person name="Hume D.A."/>
            <person name="Kai C."/>
            <person name="Sasaki D."/>
            <person name="Tomaru Y."/>
            <person name="Fukuda S."/>
            <person name="Kanamori-Katayama M."/>
            <person name="Suzuki M."/>
            <person name="Aoki J."/>
            <person name="Arakawa T."/>
            <person name="Iida J."/>
            <person name="Imamura K."/>
            <person name="Itoh M."/>
            <person name="Kato T."/>
            <person name="Kawaji H."/>
            <person name="Kawagashira N."/>
            <person name="Kawashima T."/>
            <person name="Kojima M."/>
            <person name="Kondo S."/>
            <person name="Konno H."/>
            <person name="Nakano K."/>
            <person name="Ninomiya N."/>
            <person name="Nishio T."/>
            <person name="Okada M."/>
            <person name="Plessy C."/>
            <person name="Shibata K."/>
            <person name="Shiraki T."/>
            <person name="Suzuki S."/>
            <person name="Tagami M."/>
            <person name="Waki K."/>
            <person name="Watahiki A."/>
            <person name="Okamura-Oho Y."/>
            <person name="Suzuki H."/>
            <person name="Kawai J."/>
            <person name="Hayashizaki Y."/>
        </authorList>
    </citation>
    <scope>NUCLEOTIDE SEQUENCE [LARGE SCALE MRNA]</scope>
    <source>
        <strain>NOD</strain>
        <tissue>Thymus</tissue>
    </source>
</reference>
<reference key="5">
    <citation type="journal article" date="2004" name="Genome Res.">
        <title>The status, quality, and expansion of the NIH full-length cDNA project: the Mammalian Gene Collection (MGC).</title>
        <authorList>
            <consortium name="The MGC Project Team"/>
        </authorList>
    </citation>
    <scope>NUCLEOTIDE SEQUENCE [LARGE SCALE MRNA]</scope>
    <source>
        <tissue>Liver</tissue>
    </source>
</reference>
<protein>
    <recommendedName>
        <fullName>Calpain-10</fullName>
        <ecNumber>3.4.22.-</ecNumber>
    </recommendedName>
    <alternativeName>
        <fullName>Calcium-activated neutral proteinase 10</fullName>
        <shortName>CANP 10</shortName>
    </alternativeName>
</protein>
<gene>
    <name type="primary">Capn10</name>
    <name type="synonym">Capn8</name>
</gene>
<proteinExistence type="evidence at transcript level"/>
<evidence type="ECO:0000250" key="1"/>
<evidence type="ECO:0000255" key="2">
    <source>
        <dbReference type="PROSITE-ProRule" id="PRU00239"/>
    </source>
</evidence>
<evidence type="ECO:0000305" key="3"/>